<dbReference type="EC" id="5.3.1.16" evidence="1"/>
<dbReference type="EMBL" id="CP000675">
    <property type="protein sequence ID" value="ABQ54642.1"/>
    <property type="molecule type" value="Genomic_DNA"/>
</dbReference>
<dbReference type="RefSeq" id="WP_011946303.1">
    <property type="nucleotide sequence ID" value="NC_009494.2"/>
</dbReference>
<dbReference type="SMR" id="A5IB92"/>
<dbReference type="KEGG" id="lpc:LPC_0662"/>
<dbReference type="HOGENOM" id="CLU_048577_1_2_6"/>
<dbReference type="UniPathway" id="UPA00031">
    <property type="reaction ID" value="UER00009"/>
</dbReference>
<dbReference type="GO" id="GO:0005737">
    <property type="term" value="C:cytoplasm"/>
    <property type="evidence" value="ECO:0007669"/>
    <property type="project" value="UniProtKB-SubCell"/>
</dbReference>
<dbReference type="GO" id="GO:0003949">
    <property type="term" value="F:1-(5-phosphoribosyl)-5-[(5-phosphoribosylamino)methylideneamino]imidazole-4-carboxamide isomerase activity"/>
    <property type="evidence" value="ECO:0007669"/>
    <property type="project" value="UniProtKB-UniRule"/>
</dbReference>
<dbReference type="GO" id="GO:0000105">
    <property type="term" value="P:L-histidine biosynthetic process"/>
    <property type="evidence" value="ECO:0007669"/>
    <property type="project" value="UniProtKB-UniRule"/>
</dbReference>
<dbReference type="GO" id="GO:0000162">
    <property type="term" value="P:L-tryptophan biosynthetic process"/>
    <property type="evidence" value="ECO:0007669"/>
    <property type="project" value="TreeGrafter"/>
</dbReference>
<dbReference type="CDD" id="cd04732">
    <property type="entry name" value="HisA"/>
    <property type="match status" value="1"/>
</dbReference>
<dbReference type="FunFam" id="3.20.20.70:FF:000009">
    <property type="entry name" value="1-(5-phosphoribosyl)-5-[(5-phosphoribosylamino)methylideneamino] imidazole-4-carboxamide isomerase"/>
    <property type="match status" value="1"/>
</dbReference>
<dbReference type="Gene3D" id="3.20.20.70">
    <property type="entry name" value="Aldolase class I"/>
    <property type="match status" value="1"/>
</dbReference>
<dbReference type="HAMAP" id="MF_01014">
    <property type="entry name" value="HisA"/>
    <property type="match status" value="1"/>
</dbReference>
<dbReference type="InterPro" id="IPR013785">
    <property type="entry name" value="Aldolase_TIM"/>
</dbReference>
<dbReference type="InterPro" id="IPR006062">
    <property type="entry name" value="His_biosynth"/>
</dbReference>
<dbReference type="InterPro" id="IPR044524">
    <property type="entry name" value="Isoase_HisA-like"/>
</dbReference>
<dbReference type="InterPro" id="IPR023016">
    <property type="entry name" value="Isoase_HisA-like_bact"/>
</dbReference>
<dbReference type="InterPro" id="IPR011060">
    <property type="entry name" value="RibuloseP-bd_barrel"/>
</dbReference>
<dbReference type="PANTHER" id="PTHR43090">
    <property type="entry name" value="1-(5-PHOSPHORIBOSYL)-5-[(5-PHOSPHORIBOSYLAMINO)METHYLIDENEAMINO] IMIDAZOLE-4-CARBOXAMIDE ISOMERASE"/>
    <property type="match status" value="1"/>
</dbReference>
<dbReference type="PANTHER" id="PTHR43090:SF2">
    <property type="entry name" value="1-(5-PHOSPHORIBOSYL)-5-[(5-PHOSPHORIBOSYLAMINO)METHYLIDENEAMINO] IMIDAZOLE-4-CARBOXAMIDE ISOMERASE"/>
    <property type="match status" value="1"/>
</dbReference>
<dbReference type="Pfam" id="PF00977">
    <property type="entry name" value="His_biosynth"/>
    <property type="match status" value="1"/>
</dbReference>
<dbReference type="SUPFAM" id="SSF51366">
    <property type="entry name" value="Ribulose-phoshate binding barrel"/>
    <property type="match status" value="1"/>
</dbReference>
<comment type="catalytic activity">
    <reaction evidence="1">
        <text>1-(5-phospho-beta-D-ribosyl)-5-[(5-phospho-beta-D-ribosylamino)methylideneamino]imidazole-4-carboxamide = 5-[(5-phospho-1-deoxy-D-ribulos-1-ylimino)methylamino]-1-(5-phospho-beta-D-ribosyl)imidazole-4-carboxamide</text>
        <dbReference type="Rhea" id="RHEA:15469"/>
        <dbReference type="ChEBI" id="CHEBI:58435"/>
        <dbReference type="ChEBI" id="CHEBI:58525"/>
        <dbReference type="EC" id="5.3.1.16"/>
    </reaction>
</comment>
<comment type="pathway">
    <text evidence="1">Amino-acid biosynthesis; L-histidine biosynthesis; L-histidine from 5-phospho-alpha-D-ribose 1-diphosphate: step 4/9.</text>
</comment>
<comment type="subcellular location">
    <subcellularLocation>
        <location evidence="1">Cytoplasm</location>
    </subcellularLocation>
</comment>
<comment type="similarity">
    <text evidence="1">Belongs to the HisA/HisF family.</text>
</comment>
<protein>
    <recommendedName>
        <fullName evidence="1">1-(5-phosphoribosyl)-5-[(5-phosphoribosylamino)methylideneamino] imidazole-4-carboxamide isomerase</fullName>
        <ecNumber evidence="1">5.3.1.16</ecNumber>
    </recommendedName>
    <alternativeName>
        <fullName evidence="1">Phosphoribosylformimino-5-aminoimidazole carboxamide ribotide isomerase</fullName>
    </alternativeName>
</protein>
<sequence length="239" mass="26262">MLVIPAIDLQSGRCVRLKQGRFDQVTQFSVFPIERALHFAKLGAKRLHVVDLDGARSGKMQQLELICSMQKTGIPIQAGGGIRSIEQALECSSAGISQLVIGSLAITNTDLTIQIIEKIKPENIVLALDVRVDTKVPLLAINGWQNNSTSSLWEVVSYYENYGIKNILCTDIACDGMMNGPNFDLYQQAVEYFPQIAWQASGGIRHMQDITTLGSLGISAVILGLMLYQDNVSFEELLC</sequence>
<proteinExistence type="inferred from homology"/>
<accession>A5IB92</accession>
<organism>
    <name type="scientific">Legionella pneumophila (strain Corby)</name>
    <dbReference type="NCBI Taxonomy" id="400673"/>
    <lineage>
        <taxon>Bacteria</taxon>
        <taxon>Pseudomonadati</taxon>
        <taxon>Pseudomonadota</taxon>
        <taxon>Gammaproteobacteria</taxon>
        <taxon>Legionellales</taxon>
        <taxon>Legionellaceae</taxon>
        <taxon>Legionella</taxon>
    </lineage>
</organism>
<keyword id="KW-0028">Amino-acid biosynthesis</keyword>
<keyword id="KW-0963">Cytoplasm</keyword>
<keyword id="KW-0368">Histidine biosynthesis</keyword>
<keyword id="KW-0413">Isomerase</keyword>
<name>HIS4_LEGPC</name>
<feature type="chain" id="PRO_1000063215" description="1-(5-phosphoribosyl)-5-[(5-phosphoribosylamino)methylideneamino] imidazole-4-carboxamide isomerase">
    <location>
        <begin position="1"/>
        <end position="239"/>
    </location>
</feature>
<feature type="active site" description="Proton acceptor" evidence="1">
    <location>
        <position position="8"/>
    </location>
</feature>
<feature type="active site" description="Proton donor" evidence="1">
    <location>
        <position position="129"/>
    </location>
</feature>
<reference key="1">
    <citation type="submission" date="2006-11" db="EMBL/GenBank/DDBJ databases">
        <title>Identification and characterization of a new conjugation/ type IVA secretion system (trb/tra) of L. pneumophila Corby localized on a mobile genomic island.</title>
        <authorList>
            <person name="Gloeckner G."/>
            <person name="Albert-Weissenberger C."/>
            <person name="Weinmann E."/>
            <person name="Jacobi S."/>
            <person name="Schunder E."/>
            <person name="Steinert M."/>
            <person name="Buchrieser C."/>
            <person name="Hacker J."/>
            <person name="Heuner K."/>
        </authorList>
    </citation>
    <scope>NUCLEOTIDE SEQUENCE [LARGE SCALE GENOMIC DNA]</scope>
    <source>
        <strain>Corby</strain>
    </source>
</reference>
<gene>
    <name evidence="1" type="primary">hisA</name>
    <name type="ordered locus">LPC_0662</name>
</gene>
<evidence type="ECO:0000255" key="1">
    <source>
        <dbReference type="HAMAP-Rule" id="MF_01014"/>
    </source>
</evidence>